<organism>
    <name type="scientific">Phaeosphaeria nodorum (strain SN15 / ATCC MYA-4574 / FGSC 10173)</name>
    <name type="common">Glume blotch fungus</name>
    <name type="synonym">Parastagonospora nodorum</name>
    <dbReference type="NCBI Taxonomy" id="321614"/>
    <lineage>
        <taxon>Eukaryota</taxon>
        <taxon>Fungi</taxon>
        <taxon>Dikarya</taxon>
        <taxon>Ascomycota</taxon>
        <taxon>Pezizomycotina</taxon>
        <taxon>Dothideomycetes</taxon>
        <taxon>Pleosporomycetidae</taxon>
        <taxon>Pleosporales</taxon>
        <taxon>Pleosporineae</taxon>
        <taxon>Phaeosphaeriaceae</taxon>
        <taxon>Parastagonospora</taxon>
    </lineage>
</organism>
<accession>Q9P8C0</accession>
<accession>Q0V3Y6</accession>
<accession>Q53Z50</accession>
<name>G3P_PHANO</name>
<keyword id="KW-0963">Cytoplasm</keyword>
<keyword id="KW-0324">Glycolysis</keyword>
<keyword id="KW-0520">NAD</keyword>
<keyword id="KW-0560">Oxidoreductase</keyword>
<evidence type="ECO:0000250" key="1"/>
<evidence type="ECO:0000255" key="2">
    <source>
        <dbReference type="PROSITE-ProRule" id="PRU10009"/>
    </source>
</evidence>
<evidence type="ECO:0000305" key="3"/>
<comment type="catalytic activity">
    <reaction evidence="2">
        <text>D-glyceraldehyde 3-phosphate + phosphate + NAD(+) = (2R)-3-phospho-glyceroyl phosphate + NADH + H(+)</text>
        <dbReference type="Rhea" id="RHEA:10300"/>
        <dbReference type="ChEBI" id="CHEBI:15378"/>
        <dbReference type="ChEBI" id="CHEBI:43474"/>
        <dbReference type="ChEBI" id="CHEBI:57540"/>
        <dbReference type="ChEBI" id="CHEBI:57604"/>
        <dbReference type="ChEBI" id="CHEBI:57945"/>
        <dbReference type="ChEBI" id="CHEBI:59776"/>
        <dbReference type="EC" id="1.2.1.12"/>
    </reaction>
</comment>
<comment type="pathway">
    <text>Carbohydrate degradation; glycolysis; pyruvate from D-glyceraldehyde 3-phosphate: step 1/5.</text>
</comment>
<comment type="subunit">
    <text evidence="1">Homotetramer.</text>
</comment>
<comment type="subcellular location">
    <subcellularLocation>
        <location evidence="1">Cytoplasm</location>
    </subcellularLocation>
</comment>
<comment type="similarity">
    <text evidence="3">Belongs to the glyceraldehyde-3-phosphate dehydrogenase family.</text>
</comment>
<proteinExistence type="inferred from homology"/>
<protein>
    <recommendedName>
        <fullName>Glyceraldehyde-3-phosphate dehydrogenase</fullName>
        <shortName>GAPDH</shortName>
        <ecNumber>1.2.1.12</ecNumber>
    </recommendedName>
</protein>
<feature type="chain" id="PRO_0000145567" description="Glyceraldehyde-3-phosphate dehydrogenase">
    <location>
        <begin position="1"/>
        <end position="337"/>
    </location>
</feature>
<feature type="active site" description="Nucleophile" evidence="2">
    <location>
        <position position="151"/>
    </location>
</feature>
<feature type="binding site" evidence="1">
    <location>
        <begin position="12"/>
        <end position="13"/>
    </location>
    <ligand>
        <name>NAD(+)</name>
        <dbReference type="ChEBI" id="CHEBI:57540"/>
    </ligand>
</feature>
<feature type="binding site" evidence="1">
    <location>
        <position position="34"/>
    </location>
    <ligand>
        <name>NAD(+)</name>
        <dbReference type="ChEBI" id="CHEBI:57540"/>
    </ligand>
</feature>
<feature type="binding site" evidence="1">
    <location>
        <position position="79"/>
    </location>
    <ligand>
        <name>NAD(+)</name>
        <dbReference type="ChEBI" id="CHEBI:57540"/>
    </ligand>
</feature>
<feature type="binding site" evidence="1">
    <location>
        <begin position="150"/>
        <end position="152"/>
    </location>
    <ligand>
        <name>D-glyceraldehyde 3-phosphate</name>
        <dbReference type="ChEBI" id="CHEBI:59776"/>
    </ligand>
</feature>
<feature type="binding site" evidence="1">
    <location>
        <position position="181"/>
    </location>
    <ligand>
        <name>D-glyceraldehyde 3-phosphate</name>
        <dbReference type="ChEBI" id="CHEBI:59776"/>
    </ligand>
</feature>
<feature type="binding site" evidence="1">
    <location>
        <begin position="210"/>
        <end position="211"/>
    </location>
    <ligand>
        <name>D-glyceraldehyde 3-phosphate</name>
        <dbReference type="ChEBI" id="CHEBI:59776"/>
    </ligand>
</feature>
<feature type="binding site" evidence="1">
    <location>
        <position position="233"/>
    </location>
    <ligand>
        <name>D-glyceraldehyde 3-phosphate</name>
        <dbReference type="ChEBI" id="CHEBI:59776"/>
    </ligand>
</feature>
<feature type="binding site" evidence="1">
    <location>
        <position position="315"/>
    </location>
    <ligand>
        <name>NAD(+)</name>
        <dbReference type="ChEBI" id="CHEBI:57540"/>
    </ligand>
</feature>
<feature type="site" description="Activates thiol group during catalysis" evidence="1">
    <location>
        <position position="178"/>
    </location>
</feature>
<sequence length="337" mass="36491">MVVKVGINGFGRIGRIVFRNAIEHNDVEIVAVNDPFIEPHYAAYMLKYDSQHGQFKGDIKVEGNDLTINGKTIRFYTEKDPANIPWSETGAYYVVESTGVFTTTDKAKAHLKGGAKKVVISAPSADAPMFVMGVNNETYTKDIEVLSNASCTTNCLAPLAKVIHDKFTIIEGLMTTVHSYTATQKVVDGPSAKDWRGGRTAAQNIIPSSTGAAKAVGKVIPDLNGKLTGMSMRVPTSNVSVVDLTVRLEKGATYDEIKEAVKAAADGPLNGILGYTEDEIVSTDLNGDTRSSIFDAKAGISLNKNFVKLVSWYDNEWGYSRRVLDLLVYIAKVDGNA</sequence>
<reference key="1">
    <citation type="submission" date="2000-01" db="EMBL/GenBank/DDBJ databases">
        <title>The glyceraldehyde 3-phosphate dehydrogenase gene of Stagonospora nodorum.</title>
        <authorList>
            <person name="Cooley R.N."/>
        </authorList>
    </citation>
    <scope>NUCLEOTIDE SEQUENCE [GENOMIC DNA]</scope>
    <source>
        <strain>BSm300</strain>
    </source>
</reference>
<reference key="2">
    <citation type="submission" date="2003-08" db="EMBL/GenBank/DDBJ databases">
        <title>Sequence comparison of glyceraldehyde 3-phosphate dehydrogenase gene in cereal Stagonospora species.</title>
        <authorList>
            <person name="Ueng P.P."/>
            <person name="Reszka E."/>
            <person name="Arseniuk E."/>
            <person name="Chung K.-R."/>
        </authorList>
    </citation>
    <scope>NUCLEOTIDE SEQUENCE [GENOMIC DNA]</scope>
    <source>
        <strain>9074</strain>
        <strain>ATCC 200805 / S-82-13</strain>
        <strain>ATCC 200806 / S-74-20A</strain>
        <strain>Sn37-1</strain>
    </source>
</reference>
<reference key="3">
    <citation type="journal article" date="2007" name="Plant Cell">
        <title>Dothideomycete-plant interactions illuminated by genome sequencing and EST analysis of the wheat pathogen Stagonospora nodorum.</title>
        <authorList>
            <person name="Hane J.K."/>
            <person name="Lowe R.G.T."/>
            <person name="Solomon P.S."/>
            <person name="Tan K.-C."/>
            <person name="Schoch C.L."/>
            <person name="Spatafora J.W."/>
            <person name="Crous P.W."/>
            <person name="Kodira C.D."/>
            <person name="Birren B.W."/>
            <person name="Galagan J.E."/>
            <person name="Torriani S.F.F."/>
            <person name="McDonald B.A."/>
            <person name="Oliver R.P."/>
        </authorList>
    </citation>
    <scope>NUCLEOTIDE SEQUENCE [LARGE SCALE GENOMIC DNA]</scope>
    <source>
        <strain>SN15 / ATCC MYA-4574 / FGSC 10173</strain>
    </source>
</reference>
<gene>
    <name type="primary">GPD1</name>
    <name type="ORF">SNOG_01278</name>
</gene>
<dbReference type="EC" id="1.2.1.12"/>
<dbReference type="EMBL" id="AJ271155">
    <property type="protein sequence ID" value="CAB72263.1"/>
    <property type="molecule type" value="Genomic_DNA"/>
</dbReference>
<dbReference type="EMBL" id="AY364460">
    <property type="protein sequence ID" value="AAQ62909.1"/>
    <property type="molecule type" value="Genomic_DNA"/>
</dbReference>
<dbReference type="EMBL" id="AY364461">
    <property type="protein sequence ID" value="AAQ62910.1"/>
    <property type="molecule type" value="Genomic_DNA"/>
</dbReference>
<dbReference type="EMBL" id="AY364462">
    <property type="protein sequence ID" value="AAQ62911.1"/>
    <property type="molecule type" value="Genomic_DNA"/>
</dbReference>
<dbReference type="EMBL" id="AY364464">
    <property type="protein sequence ID" value="AAQ62913.1"/>
    <property type="molecule type" value="Genomic_DNA"/>
</dbReference>
<dbReference type="EMBL" id="CH445326">
    <property type="protein sequence ID" value="EAT90927.1"/>
    <property type="molecule type" value="Genomic_DNA"/>
</dbReference>
<dbReference type="RefSeq" id="XP_001791924.1">
    <property type="nucleotide sequence ID" value="XM_001791872.1"/>
</dbReference>
<dbReference type="SMR" id="Q9P8C0"/>
<dbReference type="FunCoup" id="Q9P8C0">
    <property type="interactions" value="1057"/>
</dbReference>
<dbReference type="STRING" id="321614.Q9P8C0"/>
<dbReference type="GeneID" id="5968769"/>
<dbReference type="KEGG" id="pno:SNOG_01278"/>
<dbReference type="VEuPathDB" id="FungiDB:JI435_012780"/>
<dbReference type="InParanoid" id="Q9P8C0"/>
<dbReference type="OMA" id="YGYTCNM"/>
<dbReference type="OrthoDB" id="1152826at2759"/>
<dbReference type="UniPathway" id="UPA00109">
    <property type="reaction ID" value="UER00184"/>
</dbReference>
<dbReference type="Proteomes" id="UP000001055">
    <property type="component" value="Unassembled WGS sequence"/>
</dbReference>
<dbReference type="GO" id="GO:0005829">
    <property type="term" value="C:cytosol"/>
    <property type="evidence" value="ECO:0000318"/>
    <property type="project" value="GO_Central"/>
</dbReference>
<dbReference type="GO" id="GO:0004365">
    <property type="term" value="F:glyceraldehyde-3-phosphate dehydrogenase (NAD+) (phosphorylating) activity"/>
    <property type="evidence" value="ECO:0000318"/>
    <property type="project" value="GO_Central"/>
</dbReference>
<dbReference type="GO" id="GO:0051287">
    <property type="term" value="F:NAD binding"/>
    <property type="evidence" value="ECO:0007669"/>
    <property type="project" value="InterPro"/>
</dbReference>
<dbReference type="GO" id="GO:0050661">
    <property type="term" value="F:NADP binding"/>
    <property type="evidence" value="ECO:0007669"/>
    <property type="project" value="InterPro"/>
</dbReference>
<dbReference type="GO" id="GO:0006006">
    <property type="term" value="P:glucose metabolic process"/>
    <property type="evidence" value="ECO:0007669"/>
    <property type="project" value="InterPro"/>
</dbReference>
<dbReference type="GO" id="GO:0006096">
    <property type="term" value="P:glycolytic process"/>
    <property type="evidence" value="ECO:0000318"/>
    <property type="project" value="GO_Central"/>
</dbReference>
<dbReference type="CDD" id="cd18126">
    <property type="entry name" value="GAPDH_I_C"/>
    <property type="match status" value="1"/>
</dbReference>
<dbReference type="CDD" id="cd05214">
    <property type="entry name" value="GAPDH_I_N"/>
    <property type="match status" value="1"/>
</dbReference>
<dbReference type="FunFam" id="3.30.360.10:FF:000001">
    <property type="entry name" value="Glyceraldehyde-3-phosphate dehydrogenase"/>
    <property type="match status" value="1"/>
</dbReference>
<dbReference type="FunFam" id="3.40.50.720:FF:000020">
    <property type="entry name" value="Glyceraldehyde-3-phosphate dehydrogenase"/>
    <property type="match status" value="1"/>
</dbReference>
<dbReference type="Gene3D" id="3.30.360.10">
    <property type="entry name" value="Dihydrodipicolinate Reductase, domain 2"/>
    <property type="match status" value="1"/>
</dbReference>
<dbReference type="Gene3D" id="3.40.50.720">
    <property type="entry name" value="NAD(P)-binding Rossmann-like Domain"/>
    <property type="match status" value="1"/>
</dbReference>
<dbReference type="InterPro" id="IPR020831">
    <property type="entry name" value="GlycerAld/Erythrose_P_DH"/>
</dbReference>
<dbReference type="InterPro" id="IPR020830">
    <property type="entry name" value="GlycerAld_3-P_DH_AS"/>
</dbReference>
<dbReference type="InterPro" id="IPR020829">
    <property type="entry name" value="GlycerAld_3-P_DH_cat"/>
</dbReference>
<dbReference type="InterPro" id="IPR020828">
    <property type="entry name" value="GlycerAld_3-P_DH_NAD(P)-bd"/>
</dbReference>
<dbReference type="InterPro" id="IPR006424">
    <property type="entry name" value="Glyceraldehyde-3-P_DH_1"/>
</dbReference>
<dbReference type="InterPro" id="IPR036291">
    <property type="entry name" value="NAD(P)-bd_dom_sf"/>
</dbReference>
<dbReference type="NCBIfam" id="TIGR01534">
    <property type="entry name" value="GAPDH-I"/>
    <property type="match status" value="1"/>
</dbReference>
<dbReference type="PANTHER" id="PTHR10836">
    <property type="entry name" value="GLYCERALDEHYDE 3-PHOSPHATE DEHYDROGENASE"/>
    <property type="match status" value="1"/>
</dbReference>
<dbReference type="PANTHER" id="PTHR10836:SF76">
    <property type="entry name" value="GLYCERALDEHYDE-3-PHOSPHATE DEHYDROGENASE-RELATED"/>
    <property type="match status" value="1"/>
</dbReference>
<dbReference type="Pfam" id="PF02800">
    <property type="entry name" value="Gp_dh_C"/>
    <property type="match status" value="1"/>
</dbReference>
<dbReference type="Pfam" id="PF00044">
    <property type="entry name" value="Gp_dh_N"/>
    <property type="match status" value="1"/>
</dbReference>
<dbReference type="PIRSF" id="PIRSF000149">
    <property type="entry name" value="GAP_DH"/>
    <property type="match status" value="1"/>
</dbReference>
<dbReference type="PRINTS" id="PR00078">
    <property type="entry name" value="G3PDHDRGNASE"/>
</dbReference>
<dbReference type="SMART" id="SM00846">
    <property type="entry name" value="Gp_dh_N"/>
    <property type="match status" value="1"/>
</dbReference>
<dbReference type="SUPFAM" id="SSF55347">
    <property type="entry name" value="Glyceraldehyde-3-phosphate dehydrogenase-like, C-terminal domain"/>
    <property type="match status" value="1"/>
</dbReference>
<dbReference type="SUPFAM" id="SSF51735">
    <property type="entry name" value="NAD(P)-binding Rossmann-fold domains"/>
    <property type="match status" value="1"/>
</dbReference>
<dbReference type="PROSITE" id="PS00071">
    <property type="entry name" value="GAPDH"/>
    <property type="match status" value="1"/>
</dbReference>